<evidence type="ECO:0000255" key="1">
    <source>
        <dbReference type="HAMAP-Rule" id="MF_01114"/>
    </source>
</evidence>
<proteinExistence type="inferred from homology"/>
<organism>
    <name type="scientific">Vibrio vulnificus (strain CMCP6)</name>
    <dbReference type="NCBI Taxonomy" id="216895"/>
    <lineage>
        <taxon>Bacteria</taxon>
        <taxon>Pseudomonadati</taxon>
        <taxon>Pseudomonadota</taxon>
        <taxon>Gammaproteobacteria</taxon>
        <taxon>Vibrionales</taxon>
        <taxon>Vibrionaceae</taxon>
        <taxon>Vibrio</taxon>
    </lineage>
</organism>
<reference key="1">
    <citation type="submission" date="2002-12" db="EMBL/GenBank/DDBJ databases">
        <title>Complete genome sequence of Vibrio vulnificus CMCP6.</title>
        <authorList>
            <person name="Rhee J.H."/>
            <person name="Kim S.Y."/>
            <person name="Chung S.S."/>
            <person name="Kim J.J."/>
            <person name="Moon Y.H."/>
            <person name="Jeong H."/>
            <person name="Choy H.E."/>
        </authorList>
    </citation>
    <scope>NUCLEOTIDE SEQUENCE [LARGE SCALE GENOMIC DNA]</scope>
    <source>
        <strain>CMCP6</strain>
    </source>
</reference>
<feature type="chain" id="PRO_0000162493" description="Regulatory protein RecX">
    <location>
        <begin position="1"/>
        <end position="153"/>
    </location>
</feature>
<comment type="function">
    <text evidence="1">Modulates RecA activity.</text>
</comment>
<comment type="subcellular location">
    <subcellularLocation>
        <location evidence="1">Cytoplasm</location>
    </subcellularLocation>
</comment>
<comment type="similarity">
    <text evidence="1">Belongs to the RecX family.</text>
</comment>
<accession>Q8DC50</accession>
<sequence length="153" mass="17958">MHHRFTPPMMSCKDTAIQLLSRRDHGQYELRQKLTVKGYASQDIESAMHFCLEHGYLDDLRYAKSQIRQHVGKGHGERRIRQELSLKQVSDSVVENAFAEEPQDWFELAKSVAMKKFNGVKAKEQKEYAKQVRFLQYRGFSFEQIRYALSDEA</sequence>
<keyword id="KW-0963">Cytoplasm</keyword>
<dbReference type="EMBL" id="AE016795">
    <property type="protein sequence ID" value="AAO10015.1"/>
    <property type="molecule type" value="Genomic_DNA"/>
</dbReference>
<dbReference type="RefSeq" id="WP_011079525.1">
    <property type="nucleotide sequence ID" value="NC_004459.3"/>
</dbReference>
<dbReference type="SMR" id="Q8DC50"/>
<dbReference type="KEGG" id="vvu:VV1_1592"/>
<dbReference type="HOGENOM" id="CLU_066607_3_2_6"/>
<dbReference type="Proteomes" id="UP000002275">
    <property type="component" value="Chromosome 1"/>
</dbReference>
<dbReference type="GO" id="GO:0005737">
    <property type="term" value="C:cytoplasm"/>
    <property type="evidence" value="ECO:0007669"/>
    <property type="project" value="UniProtKB-SubCell"/>
</dbReference>
<dbReference type="GO" id="GO:0006282">
    <property type="term" value="P:regulation of DNA repair"/>
    <property type="evidence" value="ECO:0007669"/>
    <property type="project" value="UniProtKB-UniRule"/>
</dbReference>
<dbReference type="Gene3D" id="1.10.10.10">
    <property type="entry name" value="Winged helix-like DNA-binding domain superfamily/Winged helix DNA-binding domain"/>
    <property type="match status" value="3"/>
</dbReference>
<dbReference type="HAMAP" id="MF_01114">
    <property type="entry name" value="RecX"/>
    <property type="match status" value="1"/>
</dbReference>
<dbReference type="InterPro" id="IPR053926">
    <property type="entry name" value="RecX_HTH_1st"/>
</dbReference>
<dbReference type="InterPro" id="IPR053924">
    <property type="entry name" value="RecX_HTH_2nd"/>
</dbReference>
<dbReference type="InterPro" id="IPR053925">
    <property type="entry name" value="RecX_HTH_3rd"/>
</dbReference>
<dbReference type="InterPro" id="IPR003783">
    <property type="entry name" value="Regulatory_RecX"/>
</dbReference>
<dbReference type="InterPro" id="IPR036388">
    <property type="entry name" value="WH-like_DNA-bd_sf"/>
</dbReference>
<dbReference type="NCBIfam" id="NF001057">
    <property type="entry name" value="PRK00117.3-3"/>
    <property type="match status" value="1"/>
</dbReference>
<dbReference type="PANTHER" id="PTHR33602">
    <property type="entry name" value="REGULATORY PROTEIN RECX FAMILY PROTEIN"/>
    <property type="match status" value="1"/>
</dbReference>
<dbReference type="PANTHER" id="PTHR33602:SF1">
    <property type="entry name" value="REGULATORY PROTEIN RECX FAMILY PROTEIN"/>
    <property type="match status" value="1"/>
</dbReference>
<dbReference type="Pfam" id="PF21982">
    <property type="entry name" value="RecX_HTH1"/>
    <property type="match status" value="1"/>
</dbReference>
<dbReference type="Pfam" id="PF02631">
    <property type="entry name" value="RecX_HTH2"/>
    <property type="match status" value="1"/>
</dbReference>
<dbReference type="Pfam" id="PF21981">
    <property type="entry name" value="RecX_HTH3"/>
    <property type="match status" value="1"/>
</dbReference>
<gene>
    <name evidence="1" type="primary">recX</name>
    <name type="ordered locus">VV1_1592</name>
</gene>
<name>RECX_VIBVU</name>
<protein>
    <recommendedName>
        <fullName evidence="1">Regulatory protein RecX</fullName>
    </recommendedName>
</protein>